<organism>
    <name type="scientific">Mus musculus</name>
    <name type="common">Mouse</name>
    <dbReference type="NCBI Taxonomy" id="10090"/>
    <lineage>
        <taxon>Eukaryota</taxon>
        <taxon>Metazoa</taxon>
        <taxon>Chordata</taxon>
        <taxon>Craniata</taxon>
        <taxon>Vertebrata</taxon>
        <taxon>Euteleostomi</taxon>
        <taxon>Mammalia</taxon>
        <taxon>Eutheria</taxon>
        <taxon>Euarchontoglires</taxon>
        <taxon>Glires</taxon>
        <taxon>Rodentia</taxon>
        <taxon>Myomorpha</taxon>
        <taxon>Muroidea</taxon>
        <taxon>Muridae</taxon>
        <taxon>Murinae</taxon>
        <taxon>Mus</taxon>
        <taxon>Mus</taxon>
    </lineage>
</organism>
<reference key="1">
    <citation type="journal article" date="2005" name="Science">
        <title>The transcriptional landscape of the mammalian genome.</title>
        <authorList>
            <person name="Carninci P."/>
            <person name="Kasukawa T."/>
            <person name="Katayama S."/>
            <person name="Gough J."/>
            <person name="Frith M.C."/>
            <person name="Maeda N."/>
            <person name="Oyama R."/>
            <person name="Ravasi T."/>
            <person name="Lenhard B."/>
            <person name="Wells C."/>
            <person name="Kodzius R."/>
            <person name="Shimokawa K."/>
            <person name="Bajic V.B."/>
            <person name="Brenner S.E."/>
            <person name="Batalov S."/>
            <person name="Forrest A.R."/>
            <person name="Zavolan M."/>
            <person name="Davis M.J."/>
            <person name="Wilming L.G."/>
            <person name="Aidinis V."/>
            <person name="Allen J.E."/>
            <person name="Ambesi-Impiombato A."/>
            <person name="Apweiler R."/>
            <person name="Aturaliya R.N."/>
            <person name="Bailey T.L."/>
            <person name="Bansal M."/>
            <person name="Baxter L."/>
            <person name="Beisel K.W."/>
            <person name="Bersano T."/>
            <person name="Bono H."/>
            <person name="Chalk A.M."/>
            <person name="Chiu K.P."/>
            <person name="Choudhary V."/>
            <person name="Christoffels A."/>
            <person name="Clutterbuck D.R."/>
            <person name="Crowe M.L."/>
            <person name="Dalla E."/>
            <person name="Dalrymple B.P."/>
            <person name="de Bono B."/>
            <person name="Della Gatta G."/>
            <person name="di Bernardo D."/>
            <person name="Down T."/>
            <person name="Engstrom P."/>
            <person name="Fagiolini M."/>
            <person name="Faulkner G."/>
            <person name="Fletcher C.F."/>
            <person name="Fukushima T."/>
            <person name="Furuno M."/>
            <person name="Futaki S."/>
            <person name="Gariboldi M."/>
            <person name="Georgii-Hemming P."/>
            <person name="Gingeras T.R."/>
            <person name="Gojobori T."/>
            <person name="Green R.E."/>
            <person name="Gustincich S."/>
            <person name="Harbers M."/>
            <person name="Hayashi Y."/>
            <person name="Hensch T.K."/>
            <person name="Hirokawa N."/>
            <person name="Hill D."/>
            <person name="Huminiecki L."/>
            <person name="Iacono M."/>
            <person name="Ikeo K."/>
            <person name="Iwama A."/>
            <person name="Ishikawa T."/>
            <person name="Jakt M."/>
            <person name="Kanapin A."/>
            <person name="Katoh M."/>
            <person name="Kawasawa Y."/>
            <person name="Kelso J."/>
            <person name="Kitamura H."/>
            <person name="Kitano H."/>
            <person name="Kollias G."/>
            <person name="Krishnan S.P."/>
            <person name="Kruger A."/>
            <person name="Kummerfeld S.K."/>
            <person name="Kurochkin I.V."/>
            <person name="Lareau L.F."/>
            <person name="Lazarevic D."/>
            <person name="Lipovich L."/>
            <person name="Liu J."/>
            <person name="Liuni S."/>
            <person name="McWilliam S."/>
            <person name="Madan Babu M."/>
            <person name="Madera M."/>
            <person name="Marchionni L."/>
            <person name="Matsuda H."/>
            <person name="Matsuzawa S."/>
            <person name="Miki H."/>
            <person name="Mignone F."/>
            <person name="Miyake S."/>
            <person name="Morris K."/>
            <person name="Mottagui-Tabar S."/>
            <person name="Mulder N."/>
            <person name="Nakano N."/>
            <person name="Nakauchi H."/>
            <person name="Ng P."/>
            <person name="Nilsson R."/>
            <person name="Nishiguchi S."/>
            <person name="Nishikawa S."/>
            <person name="Nori F."/>
            <person name="Ohara O."/>
            <person name="Okazaki Y."/>
            <person name="Orlando V."/>
            <person name="Pang K.C."/>
            <person name="Pavan W.J."/>
            <person name="Pavesi G."/>
            <person name="Pesole G."/>
            <person name="Petrovsky N."/>
            <person name="Piazza S."/>
            <person name="Reed J."/>
            <person name="Reid J.F."/>
            <person name="Ring B.Z."/>
            <person name="Ringwald M."/>
            <person name="Rost B."/>
            <person name="Ruan Y."/>
            <person name="Salzberg S.L."/>
            <person name="Sandelin A."/>
            <person name="Schneider C."/>
            <person name="Schoenbach C."/>
            <person name="Sekiguchi K."/>
            <person name="Semple C.A."/>
            <person name="Seno S."/>
            <person name="Sessa L."/>
            <person name="Sheng Y."/>
            <person name="Shibata Y."/>
            <person name="Shimada H."/>
            <person name="Shimada K."/>
            <person name="Silva D."/>
            <person name="Sinclair B."/>
            <person name="Sperling S."/>
            <person name="Stupka E."/>
            <person name="Sugiura K."/>
            <person name="Sultana R."/>
            <person name="Takenaka Y."/>
            <person name="Taki K."/>
            <person name="Tammoja K."/>
            <person name="Tan S.L."/>
            <person name="Tang S."/>
            <person name="Taylor M.S."/>
            <person name="Tegner J."/>
            <person name="Teichmann S.A."/>
            <person name="Ueda H.R."/>
            <person name="van Nimwegen E."/>
            <person name="Verardo R."/>
            <person name="Wei C.L."/>
            <person name="Yagi K."/>
            <person name="Yamanishi H."/>
            <person name="Zabarovsky E."/>
            <person name="Zhu S."/>
            <person name="Zimmer A."/>
            <person name="Hide W."/>
            <person name="Bult C."/>
            <person name="Grimmond S.M."/>
            <person name="Teasdale R.D."/>
            <person name="Liu E.T."/>
            <person name="Brusic V."/>
            <person name="Quackenbush J."/>
            <person name="Wahlestedt C."/>
            <person name="Mattick J.S."/>
            <person name="Hume D.A."/>
            <person name="Kai C."/>
            <person name="Sasaki D."/>
            <person name="Tomaru Y."/>
            <person name="Fukuda S."/>
            <person name="Kanamori-Katayama M."/>
            <person name="Suzuki M."/>
            <person name="Aoki J."/>
            <person name="Arakawa T."/>
            <person name="Iida J."/>
            <person name="Imamura K."/>
            <person name="Itoh M."/>
            <person name="Kato T."/>
            <person name="Kawaji H."/>
            <person name="Kawagashira N."/>
            <person name="Kawashima T."/>
            <person name="Kojima M."/>
            <person name="Kondo S."/>
            <person name="Konno H."/>
            <person name="Nakano K."/>
            <person name="Ninomiya N."/>
            <person name="Nishio T."/>
            <person name="Okada M."/>
            <person name="Plessy C."/>
            <person name="Shibata K."/>
            <person name="Shiraki T."/>
            <person name="Suzuki S."/>
            <person name="Tagami M."/>
            <person name="Waki K."/>
            <person name="Watahiki A."/>
            <person name="Okamura-Oho Y."/>
            <person name="Suzuki H."/>
            <person name="Kawai J."/>
            <person name="Hayashizaki Y."/>
        </authorList>
    </citation>
    <scope>NUCLEOTIDE SEQUENCE [LARGE SCALE MRNA]</scope>
    <source>
        <strain>C57BL/6J</strain>
        <strain>NOD</strain>
        <tissue>Bone marrow</tissue>
        <tissue>Embryo</tissue>
        <tissue>Kidney</tissue>
        <tissue>Placenta</tissue>
    </source>
</reference>
<reference key="2">
    <citation type="journal article" date="2004" name="Genome Res.">
        <title>The status, quality, and expansion of the NIH full-length cDNA project: the Mammalian Gene Collection (MGC).</title>
        <authorList>
            <consortium name="The MGC Project Team"/>
        </authorList>
    </citation>
    <scope>NUCLEOTIDE SEQUENCE [LARGE SCALE MRNA]</scope>
    <source>
        <strain>FVB/N</strain>
        <tissue>Mammary tumor</tissue>
    </source>
</reference>
<reference key="3">
    <citation type="journal article" date="2010" name="Cell">
        <title>A tissue-specific atlas of mouse protein phosphorylation and expression.</title>
        <authorList>
            <person name="Huttlin E.L."/>
            <person name="Jedrychowski M.P."/>
            <person name="Elias J.E."/>
            <person name="Goswami T."/>
            <person name="Rad R."/>
            <person name="Beausoleil S.A."/>
            <person name="Villen J."/>
            <person name="Haas W."/>
            <person name="Sowa M.E."/>
            <person name="Gygi S.P."/>
        </authorList>
    </citation>
    <scope>IDENTIFICATION BY MASS SPECTROMETRY [LARGE SCALE ANALYSIS]</scope>
    <source>
        <tissue>Brain</tissue>
        <tissue>Lung</tissue>
        <tissue>Spleen</tissue>
    </source>
</reference>
<reference key="4">
    <citation type="journal article" date="2017" name="Nat. Commun.">
        <title>WIPI3 and WIPI4 beta-propellers are scaffolds for LKB1-AMPK-TSC signalling circuits in the control of autophagy.</title>
        <authorList>
            <person name="Bakula D."/>
            <person name="Mueller A.J."/>
            <person name="Zuleger T."/>
            <person name="Takacs Z."/>
            <person name="Franz-Wachtel M."/>
            <person name="Thost A.K."/>
            <person name="Brigger D."/>
            <person name="Tschan M.P."/>
            <person name="Frickey T."/>
            <person name="Robenek H."/>
            <person name="Macek B."/>
            <person name="Proikas-Cezanne T."/>
        </authorList>
    </citation>
    <scope>INTERACTION WITH RB1CC1</scope>
</reference>
<accession>Q9CR39</accession>
<accession>Q3U924</accession>
<feature type="chain" id="PRO_0000051446" description="WD repeat domain phosphoinositide-interacting protein 3">
    <location>
        <begin position="1"/>
        <end position="344"/>
    </location>
</feature>
<feature type="repeat" description="WD 1">
    <location>
        <begin position="183"/>
        <end position="223"/>
    </location>
</feature>
<feature type="repeat" description="WD 2">
    <location>
        <begin position="228"/>
        <end position="267"/>
    </location>
</feature>
<feature type="short sequence motif" description="L/FRRG motif" evidence="2">
    <location>
        <begin position="224"/>
        <end position="227"/>
    </location>
</feature>
<feature type="sequence conflict" description="In Ref. 1; BAE30843." evidence="4" ref="1">
    <original>R</original>
    <variation>S</variation>
    <location>
        <position position="199"/>
    </location>
</feature>
<comment type="function">
    <text evidence="1">Component of the autophagy machinery that controls the major intracellular degradation process by which cytoplasmic materials are packaged into autophagosomes and delivered to lysosomes for degradation. Binds phosphatidylinositol 3-phosphate (PtdIns3P), and other phosphoinositides including PtdIns(3,5)P2, forming on membranes of the endoplasmic reticulum upon activation of the upstream ULK1 and PI3 kinases and is recruited at phagophore assembly sites where it regulates the elongation of nascent phagophores downstream of WIPI2. In the cellular response to starvation, may also function together with the TSC1-TSC2 complex and RB1CC1 in the inhibition of the mTORC1 signaling pathway.</text>
</comment>
<comment type="subunit">
    <text evidence="1 3">Interacts with the TSC1-TSC2 complex; stimulated upon starvation (By similarity). Interacts with RB1CC1 (PubMed:28561066). Interacts with ATG2A (By similarity).</text>
</comment>
<comment type="subcellular location">
    <subcellularLocation>
        <location evidence="1">Preautophagosomal structure</location>
    </subcellularLocation>
    <subcellularLocation>
        <location evidence="1">Lysosome</location>
    </subcellularLocation>
</comment>
<comment type="domain">
    <text evidence="2">The L/FRRG motif is required for recruitment to PtdIns3P.</text>
</comment>
<comment type="similarity">
    <text evidence="4">Belongs to the WD repeat PROPPIN family.</text>
</comment>
<keyword id="KW-0072">Autophagy</keyword>
<keyword id="KW-0446">Lipid-binding</keyword>
<keyword id="KW-0458">Lysosome</keyword>
<keyword id="KW-1185">Reference proteome</keyword>
<keyword id="KW-0677">Repeat</keyword>
<keyword id="KW-0853">WD repeat</keyword>
<proteinExistence type="evidence at protein level"/>
<name>WIPI3_MOUSE</name>
<protein>
    <recommendedName>
        <fullName>WD repeat domain phosphoinositide-interacting protein 3</fullName>
        <shortName>WIPI-3</shortName>
    </recommendedName>
    <alternativeName>
        <fullName>WD repeat-containing protein 45-like</fullName>
        <shortName>WDR45-like protein</shortName>
    </alternativeName>
    <alternativeName>
        <fullName>WD repeat-containing protein 45B</fullName>
    </alternativeName>
</protein>
<gene>
    <name type="primary">Wdr45b</name>
    <name type="synonym">Wdr45l</name>
    <name type="synonym">Wipi3</name>
</gene>
<sequence length="344" mass="38021">MNLLPCNPHGNGLLYAGFNQDHGCFACGMENGFRVYNTDPLKEKEKQEFLEGGVGHVEMLFRCNYLALVGGGKKPKYPPNKVMIWDDLKKKTVIEIEFSTEVKAVKLRRDRIVVVLDSMIKVFTFTHNPHQLHVFETCYNPKGLCVLCPNSNNSLLAFPGTHTGHVQLVDLASTEKPPVDIPAHEGVLSCIALNLQGTRIATASEKGTLIRIFDTSSGHLIQELRRGSQAANIYCINFNQDASLICVSSDHGTVHIFAAEDPKRNKQSSLASASFLPKYFSSKWSFSKFQVPSGSPCICAFGTEPNAVIAICADGSYYKFLFSPKGECVRDVCAQFLEMTDDKL</sequence>
<dbReference type="EMBL" id="AK002352">
    <property type="protein sequence ID" value="BAB22031.2"/>
    <property type="molecule type" value="mRNA"/>
</dbReference>
<dbReference type="EMBL" id="AK013170">
    <property type="protein sequence ID" value="BAB28689.2"/>
    <property type="molecule type" value="mRNA"/>
</dbReference>
<dbReference type="EMBL" id="AK146101">
    <property type="protein sequence ID" value="BAE26902.1"/>
    <property type="molecule type" value="mRNA"/>
</dbReference>
<dbReference type="EMBL" id="AK151975">
    <property type="protein sequence ID" value="BAE30843.1"/>
    <property type="molecule type" value="mRNA"/>
</dbReference>
<dbReference type="EMBL" id="AK168603">
    <property type="protein sequence ID" value="BAE40470.1"/>
    <property type="molecule type" value="mRNA"/>
</dbReference>
<dbReference type="EMBL" id="AK170602">
    <property type="protein sequence ID" value="BAE41906.1"/>
    <property type="molecule type" value="mRNA"/>
</dbReference>
<dbReference type="EMBL" id="BC004595">
    <property type="protein sequence ID" value="AAH04595.2"/>
    <property type="molecule type" value="mRNA"/>
</dbReference>
<dbReference type="CCDS" id="CCDS25773.1"/>
<dbReference type="RefSeq" id="NP_080069.2">
    <property type="nucleotide sequence ID" value="NM_025793.3"/>
</dbReference>
<dbReference type="SMR" id="Q9CR39"/>
<dbReference type="BioGRID" id="211756">
    <property type="interactions" value="3"/>
</dbReference>
<dbReference type="FunCoup" id="Q9CR39">
    <property type="interactions" value="4048"/>
</dbReference>
<dbReference type="STRING" id="10090.ENSMUSP00000026173"/>
<dbReference type="GlyGen" id="Q9CR39">
    <property type="glycosylation" value="1 site, 1 O-linked glycan (1 site)"/>
</dbReference>
<dbReference type="iPTMnet" id="Q9CR39"/>
<dbReference type="PhosphoSitePlus" id="Q9CR39"/>
<dbReference type="PaxDb" id="10090-ENSMUSP00000026173"/>
<dbReference type="PeptideAtlas" id="Q9CR39"/>
<dbReference type="ProteomicsDB" id="299981"/>
<dbReference type="Pumba" id="Q9CR39"/>
<dbReference type="Antibodypedia" id="19917">
    <property type="antibodies" value="115 antibodies from 18 providers"/>
</dbReference>
<dbReference type="DNASU" id="66840"/>
<dbReference type="Ensembl" id="ENSMUST00000026173.13">
    <property type="protein sequence ID" value="ENSMUSP00000026173.7"/>
    <property type="gene ID" value="ENSMUSG00000025173.14"/>
</dbReference>
<dbReference type="GeneID" id="66840"/>
<dbReference type="KEGG" id="mmu:66840"/>
<dbReference type="UCSC" id="uc007mvt.2">
    <property type="organism name" value="mouse"/>
</dbReference>
<dbReference type="AGR" id="MGI:1914090"/>
<dbReference type="CTD" id="56270"/>
<dbReference type="MGI" id="MGI:1914090">
    <property type="gene designation" value="Wdr45b"/>
</dbReference>
<dbReference type="VEuPathDB" id="HostDB:ENSMUSG00000025173"/>
<dbReference type="eggNOG" id="KOG2111">
    <property type="taxonomic scope" value="Eukaryota"/>
</dbReference>
<dbReference type="GeneTree" id="ENSGT00940000157510"/>
<dbReference type="InParanoid" id="Q9CR39"/>
<dbReference type="OMA" id="GGPQCMC"/>
<dbReference type="OrthoDB" id="1667587at2759"/>
<dbReference type="PhylomeDB" id="Q9CR39"/>
<dbReference type="TreeFam" id="TF314859"/>
<dbReference type="Reactome" id="R-MMU-1632852">
    <property type="pathway name" value="Macroautophagy"/>
</dbReference>
<dbReference type="BioGRID-ORCS" id="66840">
    <property type="hits" value="3 hits in 75 CRISPR screens"/>
</dbReference>
<dbReference type="ChiTaRS" id="Wdr45b">
    <property type="organism name" value="mouse"/>
</dbReference>
<dbReference type="PRO" id="PR:Q9CR39"/>
<dbReference type="Proteomes" id="UP000000589">
    <property type="component" value="Chromosome 11"/>
</dbReference>
<dbReference type="RNAct" id="Q9CR39">
    <property type="molecule type" value="protein"/>
</dbReference>
<dbReference type="Bgee" id="ENSMUSG00000025173">
    <property type="expression patterns" value="Expressed in embryonic facial prominence and 69 other cell types or tissues"/>
</dbReference>
<dbReference type="ExpressionAtlas" id="Q9CR39">
    <property type="expression patterns" value="baseline and differential"/>
</dbReference>
<dbReference type="GO" id="GO:0005764">
    <property type="term" value="C:lysosome"/>
    <property type="evidence" value="ECO:0000250"/>
    <property type="project" value="UniProtKB"/>
</dbReference>
<dbReference type="GO" id="GO:0000407">
    <property type="term" value="C:phagophore assembly site"/>
    <property type="evidence" value="ECO:0000250"/>
    <property type="project" value="UniProtKB"/>
</dbReference>
<dbReference type="GO" id="GO:0080025">
    <property type="term" value="F:phosphatidylinositol-3,5-bisphosphate binding"/>
    <property type="evidence" value="ECO:0000250"/>
    <property type="project" value="UniProtKB"/>
</dbReference>
<dbReference type="GO" id="GO:0032266">
    <property type="term" value="F:phosphatidylinositol-3-phosphate binding"/>
    <property type="evidence" value="ECO:0000250"/>
    <property type="project" value="UniProtKB"/>
</dbReference>
<dbReference type="GO" id="GO:0062078">
    <property type="term" value="F:TSC1-TSC2 complex binding"/>
    <property type="evidence" value="ECO:0007669"/>
    <property type="project" value="Ensembl"/>
</dbReference>
<dbReference type="GO" id="GO:0000045">
    <property type="term" value="P:autophagosome assembly"/>
    <property type="evidence" value="ECO:0000250"/>
    <property type="project" value="UniProtKB"/>
</dbReference>
<dbReference type="GO" id="GO:0009267">
    <property type="term" value="P:cellular response to starvation"/>
    <property type="evidence" value="ECO:0000250"/>
    <property type="project" value="UniProtKB"/>
</dbReference>
<dbReference type="FunFam" id="2.130.10.10:FF:000083">
    <property type="entry name" value="WD repeat domain phosphoinositide-interacting protein 3"/>
    <property type="match status" value="1"/>
</dbReference>
<dbReference type="Gene3D" id="2.130.10.10">
    <property type="entry name" value="YVTN repeat-like/Quinoprotein amine dehydrogenase"/>
    <property type="match status" value="1"/>
</dbReference>
<dbReference type="InterPro" id="IPR048720">
    <property type="entry name" value="PROPPIN"/>
</dbReference>
<dbReference type="InterPro" id="IPR015943">
    <property type="entry name" value="WD40/YVTN_repeat-like_dom_sf"/>
</dbReference>
<dbReference type="InterPro" id="IPR036322">
    <property type="entry name" value="WD40_repeat_dom_sf"/>
</dbReference>
<dbReference type="InterPro" id="IPR001680">
    <property type="entry name" value="WD40_rpt"/>
</dbReference>
<dbReference type="PANTHER" id="PTHR11227">
    <property type="entry name" value="WD-REPEAT PROTEIN INTERACTING WITH PHOSPHOINOSIDES WIPI -RELATED"/>
    <property type="match status" value="1"/>
</dbReference>
<dbReference type="Pfam" id="PF21032">
    <property type="entry name" value="PROPPIN"/>
    <property type="match status" value="1"/>
</dbReference>
<dbReference type="SMART" id="SM00320">
    <property type="entry name" value="WD40"/>
    <property type="match status" value="2"/>
</dbReference>
<dbReference type="SUPFAM" id="SSF50978">
    <property type="entry name" value="WD40 repeat-like"/>
    <property type="match status" value="1"/>
</dbReference>
<evidence type="ECO:0000250" key="1">
    <source>
        <dbReference type="UniProtKB" id="Q5MNZ6"/>
    </source>
</evidence>
<evidence type="ECO:0000250" key="2">
    <source>
        <dbReference type="UniProtKB" id="Q9Y4P8"/>
    </source>
</evidence>
<evidence type="ECO:0000269" key="3">
    <source>
    </source>
</evidence>
<evidence type="ECO:0000305" key="4"/>